<reference key="1">
    <citation type="journal article" date="2000" name="DNA Res.">
        <title>Complete genome structure of the nitrogen-fixing symbiotic bacterium Mesorhizobium loti.</title>
        <authorList>
            <person name="Kaneko T."/>
            <person name="Nakamura Y."/>
            <person name="Sato S."/>
            <person name="Asamizu E."/>
            <person name="Kato T."/>
            <person name="Sasamoto S."/>
            <person name="Watanabe A."/>
            <person name="Idesawa K."/>
            <person name="Ishikawa A."/>
            <person name="Kawashima K."/>
            <person name="Kimura T."/>
            <person name="Kishida Y."/>
            <person name="Kiyokawa C."/>
            <person name="Kohara M."/>
            <person name="Matsumoto M."/>
            <person name="Matsuno A."/>
            <person name="Mochizuki Y."/>
            <person name="Nakayama S."/>
            <person name="Nakazaki N."/>
            <person name="Shimpo S."/>
            <person name="Sugimoto M."/>
            <person name="Takeuchi C."/>
            <person name="Yamada M."/>
            <person name="Tabata S."/>
        </authorList>
    </citation>
    <scope>NUCLEOTIDE SEQUENCE [LARGE SCALE GENOMIC DNA]</scope>
    <source>
        <strain>LMG 29417 / CECT 9101 / MAFF 303099</strain>
    </source>
</reference>
<feature type="chain" id="PRO_1000091896" description="3-deoxy-manno-octulosonate cytidylyltransferase">
    <location>
        <begin position="1"/>
        <end position="242"/>
    </location>
</feature>
<comment type="function">
    <text evidence="1">Activates KDO (a required 8-carbon sugar) for incorporation into bacterial lipopolysaccharide in Gram-negative bacteria.</text>
</comment>
<comment type="catalytic activity">
    <reaction evidence="1">
        <text>3-deoxy-alpha-D-manno-oct-2-ulosonate + CTP = CMP-3-deoxy-beta-D-manno-octulosonate + diphosphate</text>
        <dbReference type="Rhea" id="RHEA:23448"/>
        <dbReference type="ChEBI" id="CHEBI:33019"/>
        <dbReference type="ChEBI" id="CHEBI:37563"/>
        <dbReference type="ChEBI" id="CHEBI:85986"/>
        <dbReference type="ChEBI" id="CHEBI:85987"/>
        <dbReference type="EC" id="2.7.7.38"/>
    </reaction>
</comment>
<comment type="pathway">
    <text evidence="1">Nucleotide-sugar biosynthesis; CMP-3-deoxy-D-manno-octulosonate biosynthesis; CMP-3-deoxy-D-manno-octulosonate from 3-deoxy-D-manno-octulosonate and CTP: step 1/1.</text>
</comment>
<comment type="pathway">
    <text evidence="1">Bacterial outer membrane biogenesis; lipopolysaccharide biosynthesis.</text>
</comment>
<comment type="subcellular location">
    <subcellularLocation>
        <location evidence="1">Cytoplasm</location>
    </subcellularLocation>
</comment>
<comment type="similarity">
    <text evidence="1">Belongs to the KdsB family.</text>
</comment>
<accession>Q98BN3</accession>
<gene>
    <name evidence="1" type="primary">kdsB</name>
    <name type="ordered locus">mlr5497</name>
</gene>
<dbReference type="EC" id="2.7.7.38" evidence="1"/>
<dbReference type="EMBL" id="BA000012">
    <property type="protein sequence ID" value="BAB51939.1"/>
    <property type="molecule type" value="Genomic_DNA"/>
</dbReference>
<dbReference type="RefSeq" id="WP_010913277.1">
    <property type="nucleotide sequence ID" value="NC_002678.2"/>
</dbReference>
<dbReference type="SMR" id="Q98BN3"/>
<dbReference type="KEGG" id="mlo:mlr5497"/>
<dbReference type="PATRIC" id="fig|266835.9.peg.4369"/>
<dbReference type="eggNOG" id="COG1212">
    <property type="taxonomic scope" value="Bacteria"/>
</dbReference>
<dbReference type="HOGENOM" id="CLU_065038_0_1_5"/>
<dbReference type="BRENDA" id="2.7.7.38">
    <property type="organism ID" value="3243"/>
</dbReference>
<dbReference type="UniPathway" id="UPA00030"/>
<dbReference type="UniPathway" id="UPA00358">
    <property type="reaction ID" value="UER00476"/>
</dbReference>
<dbReference type="Proteomes" id="UP000000552">
    <property type="component" value="Chromosome"/>
</dbReference>
<dbReference type="GO" id="GO:0005829">
    <property type="term" value="C:cytosol"/>
    <property type="evidence" value="ECO:0007669"/>
    <property type="project" value="TreeGrafter"/>
</dbReference>
<dbReference type="GO" id="GO:0008690">
    <property type="term" value="F:3-deoxy-manno-octulosonate cytidylyltransferase activity"/>
    <property type="evidence" value="ECO:0007669"/>
    <property type="project" value="UniProtKB-UniRule"/>
</dbReference>
<dbReference type="GO" id="GO:0033468">
    <property type="term" value="P:CMP-keto-3-deoxy-D-manno-octulosonic acid biosynthetic process"/>
    <property type="evidence" value="ECO:0007669"/>
    <property type="project" value="UniProtKB-UniRule"/>
</dbReference>
<dbReference type="GO" id="GO:0009103">
    <property type="term" value="P:lipopolysaccharide biosynthetic process"/>
    <property type="evidence" value="ECO:0007669"/>
    <property type="project" value="UniProtKB-UniRule"/>
</dbReference>
<dbReference type="CDD" id="cd02517">
    <property type="entry name" value="CMP-KDO-Synthetase"/>
    <property type="match status" value="1"/>
</dbReference>
<dbReference type="Gene3D" id="3.90.550.10">
    <property type="entry name" value="Spore Coat Polysaccharide Biosynthesis Protein SpsA, Chain A"/>
    <property type="match status" value="1"/>
</dbReference>
<dbReference type="HAMAP" id="MF_00057">
    <property type="entry name" value="KdsB"/>
    <property type="match status" value="1"/>
</dbReference>
<dbReference type="InterPro" id="IPR003329">
    <property type="entry name" value="Cytidylyl_trans"/>
</dbReference>
<dbReference type="InterPro" id="IPR004528">
    <property type="entry name" value="KdsB"/>
</dbReference>
<dbReference type="InterPro" id="IPR029044">
    <property type="entry name" value="Nucleotide-diphossugar_trans"/>
</dbReference>
<dbReference type="NCBIfam" id="TIGR00466">
    <property type="entry name" value="kdsB"/>
    <property type="match status" value="1"/>
</dbReference>
<dbReference type="NCBIfam" id="NF003948">
    <property type="entry name" value="PRK05450.1-1"/>
    <property type="match status" value="1"/>
</dbReference>
<dbReference type="NCBIfam" id="NF003952">
    <property type="entry name" value="PRK05450.1-5"/>
    <property type="match status" value="1"/>
</dbReference>
<dbReference type="PANTHER" id="PTHR42866">
    <property type="entry name" value="3-DEOXY-MANNO-OCTULOSONATE CYTIDYLYLTRANSFERASE"/>
    <property type="match status" value="1"/>
</dbReference>
<dbReference type="PANTHER" id="PTHR42866:SF2">
    <property type="entry name" value="3-DEOXY-MANNO-OCTULOSONATE CYTIDYLYLTRANSFERASE, MITOCHONDRIAL"/>
    <property type="match status" value="1"/>
</dbReference>
<dbReference type="Pfam" id="PF02348">
    <property type="entry name" value="CTP_transf_3"/>
    <property type="match status" value="1"/>
</dbReference>
<dbReference type="SUPFAM" id="SSF53448">
    <property type="entry name" value="Nucleotide-diphospho-sugar transferases"/>
    <property type="match status" value="1"/>
</dbReference>
<name>KDSB_RHILO</name>
<proteinExistence type="inferred from homology"/>
<sequence>MSTLILIPARMASTRLPGKPLADISGAPMIVHVARRAAEAGLGRVVVATDTQSVAEAVRAHGFEAVMTRIDHESGSDRIHEALAALDPGRKVETIVNVQGDLPTIDPGIIAASLRPFEDAAVDIATLGVEIVREEEKTNPNVVKIVGSPLSATRLRALYFTRATAPWGEGPLYHHVGLYAYRRSALERFVALKPSPLERRERLEQLRALEAGMRIDAEIVRSLPLGVDTPQDLERARTILSN</sequence>
<evidence type="ECO:0000255" key="1">
    <source>
        <dbReference type="HAMAP-Rule" id="MF_00057"/>
    </source>
</evidence>
<organism>
    <name type="scientific">Mesorhizobium japonicum (strain LMG 29417 / CECT 9101 / MAFF 303099)</name>
    <name type="common">Mesorhizobium loti (strain MAFF 303099)</name>
    <dbReference type="NCBI Taxonomy" id="266835"/>
    <lineage>
        <taxon>Bacteria</taxon>
        <taxon>Pseudomonadati</taxon>
        <taxon>Pseudomonadota</taxon>
        <taxon>Alphaproteobacteria</taxon>
        <taxon>Hyphomicrobiales</taxon>
        <taxon>Phyllobacteriaceae</taxon>
        <taxon>Mesorhizobium</taxon>
    </lineage>
</organism>
<protein>
    <recommendedName>
        <fullName evidence="1">3-deoxy-manno-octulosonate cytidylyltransferase</fullName>
        <ecNumber evidence="1">2.7.7.38</ecNumber>
    </recommendedName>
    <alternativeName>
        <fullName evidence="1">CMP-2-keto-3-deoxyoctulosonic acid synthase</fullName>
        <shortName evidence="1">CKS</shortName>
        <shortName evidence="1">CMP-KDO synthase</shortName>
    </alternativeName>
</protein>
<keyword id="KW-0963">Cytoplasm</keyword>
<keyword id="KW-0448">Lipopolysaccharide biosynthesis</keyword>
<keyword id="KW-0548">Nucleotidyltransferase</keyword>
<keyword id="KW-0808">Transferase</keyword>